<dbReference type="EMBL" id="AP007281">
    <property type="protein sequence ID" value="BAG24813.1"/>
    <property type="molecule type" value="Genomic_DNA"/>
</dbReference>
<dbReference type="RefSeq" id="WP_003666299.1">
    <property type="nucleotide sequence ID" value="NC_010609.1"/>
</dbReference>
<dbReference type="SMR" id="B2G5T1"/>
<dbReference type="GeneID" id="77190112"/>
<dbReference type="KEGG" id="lrf:LAR_0297"/>
<dbReference type="HOGENOM" id="CLU_074237_2_1_9"/>
<dbReference type="GO" id="GO:0022625">
    <property type="term" value="C:cytosolic large ribosomal subunit"/>
    <property type="evidence" value="ECO:0007669"/>
    <property type="project" value="TreeGrafter"/>
</dbReference>
<dbReference type="GO" id="GO:0070180">
    <property type="term" value="F:large ribosomal subunit rRNA binding"/>
    <property type="evidence" value="ECO:0007669"/>
    <property type="project" value="UniProtKB-UniRule"/>
</dbReference>
<dbReference type="GO" id="GO:0003735">
    <property type="term" value="F:structural constituent of ribosome"/>
    <property type="evidence" value="ECO:0007669"/>
    <property type="project" value="InterPro"/>
</dbReference>
<dbReference type="GO" id="GO:0006412">
    <property type="term" value="P:translation"/>
    <property type="evidence" value="ECO:0007669"/>
    <property type="project" value="UniProtKB-UniRule"/>
</dbReference>
<dbReference type="CDD" id="cd00349">
    <property type="entry name" value="Ribosomal_L11"/>
    <property type="match status" value="1"/>
</dbReference>
<dbReference type="FunFam" id="1.10.10.250:FF:000001">
    <property type="entry name" value="50S ribosomal protein L11"/>
    <property type="match status" value="1"/>
</dbReference>
<dbReference type="FunFam" id="3.30.1550.10:FF:000001">
    <property type="entry name" value="50S ribosomal protein L11"/>
    <property type="match status" value="1"/>
</dbReference>
<dbReference type="Gene3D" id="1.10.10.250">
    <property type="entry name" value="Ribosomal protein L11, C-terminal domain"/>
    <property type="match status" value="1"/>
</dbReference>
<dbReference type="Gene3D" id="3.30.1550.10">
    <property type="entry name" value="Ribosomal protein L11/L12, N-terminal domain"/>
    <property type="match status" value="1"/>
</dbReference>
<dbReference type="HAMAP" id="MF_00736">
    <property type="entry name" value="Ribosomal_uL11"/>
    <property type="match status" value="1"/>
</dbReference>
<dbReference type="InterPro" id="IPR000911">
    <property type="entry name" value="Ribosomal_uL11"/>
</dbReference>
<dbReference type="InterPro" id="IPR006519">
    <property type="entry name" value="Ribosomal_uL11_bac-typ"/>
</dbReference>
<dbReference type="InterPro" id="IPR020783">
    <property type="entry name" value="Ribosomal_uL11_C"/>
</dbReference>
<dbReference type="InterPro" id="IPR036769">
    <property type="entry name" value="Ribosomal_uL11_C_sf"/>
</dbReference>
<dbReference type="InterPro" id="IPR020785">
    <property type="entry name" value="Ribosomal_uL11_CS"/>
</dbReference>
<dbReference type="InterPro" id="IPR020784">
    <property type="entry name" value="Ribosomal_uL11_N"/>
</dbReference>
<dbReference type="InterPro" id="IPR036796">
    <property type="entry name" value="Ribosomal_uL11_N_sf"/>
</dbReference>
<dbReference type="NCBIfam" id="TIGR01632">
    <property type="entry name" value="L11_bact"/>
    <property type="match status" value="1"/>
</dbReference>
<dbReference type="PANTHER" id="PTHR11661">
    <property type="entry name" value="60S RIBOSOMAL PROTEIN L12"/>
    <property type="match status" value="1"/>
</dbReference>
<dbReference type="PANTHER" id="PTHR11661:SF1">
    <property type="entry name" value="LARGE RIBOSOMAL SUBUNIT PROTEIN UL11M"/>
    <property type="match status" value="1"/>
</dbReference>
<dbReference type="Pfam" id="PF00298">
    <property type="entry name" value="Ribosomal_L11"/>
    <property type="match status" value="1"/>
</dbReference>
<dbReference type="Pfam" id="PF03946">
    <property type="entry name" value="Ribosomal_L11_N"/>
    <property type="match status" value="1"/>
</dbReference>
<dbReference type="SMART" id="SM00649">
    <property type="entry name" value="RL11"/>
    <property type="match status" value="1"/>
</dbReference>
<dbReference type="SUPFAM" id="SSF54747">
    <property type="entry name" value="Ribosomal L11/L12e N-terminal domain"/>
    <property type="match status" value="1"/>
</dbReference>
<dbReference type="SUPFAM" id="SSF46906">
    <property type="entry name" value="Ribosomal protein L11, C-terminal domain"/>
    <property type="match status" value="1"/>
</dbReference>
<dbReference type="PROSITE" id="PS00359">
    <property type="entry name" value="RIBOSOMAL_L11"/>
    <property type="match status" value="1"/>
</dbReference>
<reference key="1">
    <citation type="journal article" date="2008" name="DNA Res.">
        <title>Comparative genome analysis of Lactobacillus reuteri and Lactobacillus fermentum reveal a genomic island for reuterin and cobalamin production.</title>
        <authorList>
            <person name="Morita H."/>
            <person name="Toh H."/>
            <person name="Fukuda S."/>
            <person name="Horikawa H."/>
            <person name="Oshima K."/>
            <person name="Suzuki T."/>
            <person name="Murakami M."/>
            <person name="Hisamatsu S."/>
            <person name="Kato Y."/>
            <person name="Takizawa T."/>
            <person name="Fukuoka H."/>
            <person name="Yoshimura T."/>
            <person name="Itoh K."/>
            <person name="O'Sullivan D.J."/>
            <person name="McKay L.L."/>
            <person name="Ohno H."/>
            <person name="Kikuchi J."/>
            <person name="Masaoka T."/>
            <person name="Hattori M."/>
        </authorList>
    </citation>
    <scope>NUCLEOTIDE SEQUENCE [LARGE SCALE GENOMIC DNA]</scope>
    <source>
        <strain>JCM 1112</strain>
    </source>
</reference>
<feature type="chain" id="PRO_1000195658" description="Large ribosomal subunit protein uL11">
    <location>
        <begin position="1"/>
        <end position="141"/>
    </location>
</feature>
<accession>B2G5T1</accession>
<proteinExistence type="inferred from homology"/>
<name>RL11_LIMRJ</name>
<organism>
    <name type="scientific">Limosilactobacillus reuteri subsp. reuteri (strain JCM 1112)</name>
    <name type="common">Lactobacillus reuteri</name>
    <dbReference type="NCBI Taxonomy" id="557433"/>
    <lineage>
        <taxon>Bacteria</taxon>
        <taxon>Bacillati</taxon>
        <taxon>Bacillota</taxon>
        <taxon>Bacilli</taxon>
        <taxon>Lactobacillales</taxon>
        <taxon>Lactobacillaceae</taxon>
        <taxon>Limosilactobacillus</taxon>
    </lineage>
</organism>
<protein>
    <recommendedName>
        <fullName evidence="1">Large ribosomal subunit protein uL11</fullName>
    </recommendedName>
    <alternativeName>
        <fullName evidence="2">50S ribosomal protein L11</fullName>
    </alternativeName>
</protein>
<keyword id="KW-0488">Methylation</keyword>
<keyword id="KW-0687">Ribonucleoprotein</keyword>
<keyword id="KW-0689">Ribosomal protein</keyword>
<keyword id="KW-0694">RNA-binding</keyword>
<keyword id="KW-0699">rRNA-binding</keyword>
<sequence length="141" mass="14869">MAKKVANIVKLQIPAGAATPAPPVGPALGQAGINIMGFTKEFNARTADQKGMLIPVVITVYEDRSFDFITKTPPAAVLLKKAAGVEHGSGEPNTNKVASVTKDQVKEIAETKMQDLNAADVEAAMRMIEGTARSMGFTVED</sequence>
<evidence type="ECO:0000255" key="1">
    <source>
        <dbReference type="HAMAP-Rule" id="MF_00736"/>
    </source>
</evidence>
<evidence type="ECO:0000305" key="2"/>
<gene>
    <name evidence="1" type="primary">rplK</name>
    <name type="ordered locus">LAR_0297</name>
</gene>
<comment type="function">
    <text evidence="1">Forms part of the ribosomal stalk which helps the ribosome interact with GTP-bound translation factors.</text>
</comment>
<comment type="subunit">
    <text evidence="1">Part of the ribosomal stalk of the 50S ribosomal subunit. Interacts with L10 and the large rRNA to form the base of the stalk. L10 forms an elongated spine to which L12 dimers bind in a sequential fashion forming a multimeric L10(L12)X complex.</text>
</comment>
<comment type="PTM">
    <text evidence="1">One or more lysine residues are methylated.</text>
</comment>
<comment type="similarity">
    <text evidence="1">Belongs to the universal ribosomal protein uL11 family.</text>
</comment>